<proteinExistence type="inferred from homology"/>
<evidence type="ECO:0000255" key="1">
    <source>
        <dbReference type="HAMAP-Rule" id="MF_02006"/>
    </source>
</evidence>
<gene>
    <name evidence="1" type="primary">tyrS</name>
    <name type="ordered locus">SAB1587c</name>
</gene>
<accession>Q2YTG1</accession>
<feature type="chain" id="PRO_0000234772" description="Tyrosine--tRNA ligase">
    <location>
        <begin position="1"/>
        <end position="420"/>
    </location>
</feature>
<feature type="domain" description="S4 RNA-binding" evidence="1">
    <location>
        <begin position="353"/>
        <end position="420"/>
    </location>
</feature>
<feature type="short sequence motif" description="'HIGH' region">
    <location>
        <begin position="41"/>
        <end position="50"/>
    </location>
</feature>
<feature type="short sequence motif" description="'KMSKS' region">
    <location>
        <begin position="231"/>
        <end position="235"/>
    </location>
</feature>
<feature type="binding site" evidence="1">
    <location>
        <position position="36"/>
    </location>
    <ligand>
        <name>L-tyrosine</name>
        <dbReference type="ChEBI" id="CHEBI:58315"/>
    </ligand>
</feature>
<feature type="binding site" evidence="1">
    <location>
        <position position="170"/>
    </location>
    <ligand>
        <name>L-tyrosine</name>
        <dbReference type="ChEBI" id="CHEBI:58315"/>
    </ligand>
</feature>
<feature type="binding site" evidence="1">
    <location>
        <position position="174"/>
    </location>
    <ligand>
        <name>L-tyrosine</name>
        <dbReference type="ChEBI" id="CHEBI:58315"/>
    </ligand>
</feature>
<feature type="binding site" evidence="1">
    <location>
        <position position="234"/>
    </location>
    <ligand>
        <name>ATP</name>
        <dbReference type="ChEBI" id="CHEBI:30616"/>
    </ligand>
</feature>
<dbReference type="EC" id="6.1.1.1" evidence="1"/>
<dbReference type="EMBL" id="AJ938182">
    <property type="protein sequence ID" value="CAI81276.1"/>
    <property type="molecule type" value="Genomic_DNA"/>
</dbReference>
<dbReference type="RefSeq" id="WP_000186029.1">
    <property type="nucleotide sequence ID" value="NC_007622.1"/>
</dbReference>
<dbReference type="SMR" id="Q2YTG1"/>
<dbReference type="KEGG" id="sab:SAB1587c"/>
<dbReference type="HOGENOM" id="CLU_024003_0_3_9"/>
<dbReference type="GO" id="GO:0005829">
    <property type="term" value="C:cytosol"/>
    <property type="evidence" value="ECO:0007669"/>
    <property type="project" value="TreeGrafter"/>
</dbReference>
<dbReference type="GO" id="GO:0005524">
    <property type="term" value="F:ATP binding"/>
    <property type="evidence" value="ECO:0007669"/>
    <property type="project" value="UniProtKB-UniRule"/>
</dbReference>
<dbReference type="GO" id="GO:0003723">
    <property type="term" value="F:RNA binding"/>
    <property type="evidence" value="ECO:0007669"/>
    <property type="project" value="UniProtKB-KW"/>
</dbReference>
<dbReference type="GO" id="GO:0004831">
    <property type="term" value="F:tyrosine-tRNA ligase activity"/>
    <property type="evidence" value="ECO:0007669"/>
    <property type="project" value="UniProtKB-UniRule"/>
</dbReference>
<dbReference type="GO" id="GO:0006437">
    <property type="term" value="P:tyrosyl-tRNA aminoacylation"/>
    <property type="evidence" value="ECO:0007669"/>
    <property type="project" value="UniProtKB-UniRule"/>
</dbReference>
<dbReference type="CDD" id="cd00165">
    <property type="entry name" value="S4"/>
    <property type="match status" value="1"/>
</dbReference>
<dbReference type="CDD" id="cd00395">
    <property type="entry name" value="Tyr_Trp_RS_core"/>
    <property type="match status" value="1"/>
</dbReference>
<dbReference type="FunFam" id="1.10.240.10:FF:000001">
    <property type="entry name" value="Tyrosine--tRNA ligase"/>
    <property type="match status" value="1"/>
</dbReference>
<dbReference type="FunFam" id="3.10.290.10:FF:000012">
    <property type="entry name" value="Tyrosine--tRNA ligase"/>
    <property type="match status" value="1"/>
</dbReference>
<dbReference type="FunFam" id="3.40.50.620:FF:000008">
    <property type="entry name" value="Tyrosine--tRNA ligase"/>
    <property type="match status" value="1"/>
</dbReference>
<dbReference type="Gene3D" id="3.40.50.620">
    <property type="entry name" value="HUPs"/>
    <property type="match status" value="1"/>
</dbReference>
<dbReference type="Gene3D" id="3.10.290.10">
    <property type="entry name" value="RNA-binding S4 domain"/>
    <property type="match status" value="1"/>
</dbReference>
<dbReference type="Gene3D" id="1.10.240.10">
    <property type="entry name" value="Tyrosyl-Transfer RNA Synthetase"/>
    <property type="match status" value="1"/>
</dbReference>
<dbReference type="HAMAP" id="MF_02006">
    <property type="entry name" value="Tyr_tRNA_synth_type1"/>
    <property type="match status" value="1"/>
</dbReference>
<dbReference type="InterPro" id="IPR001412">
    <property type="entry name" value="aa-tRNA-synth_I_CS"/>
</dbReference>
<dbReference type="InterPro" id="IPR002305">
    <property type="entry name" value="aa-tRNA-synth_Ic"/>
</dbReference>
<dbReference type="InterPro" id="IPR014729">
    <property type="entry name" value="Rossmann-like_a/b/a_fold"/>
</dbReference>
<dbReference type="InterPro" id="IPR002942">
    <property type="entry name" value="S4_RNA-bd"/>
</dbReference>
<dbReference type="InterPro" id="IPR036986">
    <property type="entry name" value="S4_RNA-bd_sf"/>
</dbReference>
<dbReference type="InterPro" id="IPR054608">
    <property type="entry name" value="SYY-like_C"/>
</dbReference>
<dbReference type="InterPro" id="IPR002307">
    <property type="entry name" value="Tyr-tRNA-ligase"/>
</dbReference>
<dbReference type="InterPro" id="IPR024088">
    <property type="entry name" value="Tyr-tRNA-ligase_bac-type"/>
</dbReference>
<dbReference type="InterPro" id="IPR024107">
    <property type="entry name" value="Tyr-tRNA-ligase_bac_1"/>
</dbReference>
<dbReference type="NCBIfam" id="TIGR00234">
    <property type="entry name" value="tyrS"/>
    <property type="match status" value="1"/>
</dbReference>
<dbReference type="PANTHER" id="PTHR11766:SF0">
    <property type="entry name" value="TYROSINE--TRNA LIGASE, MITOCHONDRIAL"/>
    <property type="match status" value="1"/>
</dbReference>
<dbReference type="PANTHER" id="PTHR11766">
    <property type="entry name" value="TYROSYL-TRNA SYNTHETASE"/>
    <property type="match status" value="1"/>
</dbReference>
<dbReference type="Pfam" id="PF22421">
    <property type="entry name" value="SYY_C-terminal"/>
    <property type="match status" value="1"/>
</dbReference>
<dbReference type="Pfam" id="PF00579">
    <property type="entry name" value="tRNA-synt_1b"/>
    <property type="match status" value="1"/>
</dbReference>
<dbReference type="PRINTS" id="PR01040">
    <property type="entry name" value="TRNASYNTHTYR"/>
</dbReference>
<dbReference type="SMART" id="SM00363">
    <property type="entry name" value="S4"/>
    <property type="match status" value="1"/>
</dbReference>
<dbReference type="SUPFAM" id="SSF55174">
    <property type="entry name" value="Alpha-L RNA-binding motif"/>
    <property type="match status" value="1"/>
</dbReference>
<dbReference type="SUPFAM" id="SSF52374">
    <property type="entry name" value="Nucleotidylyl transferase"/>
    <property type="match status" value="1"/>
</dbReference>
<dbReference type="PROSITE" id="PS00178">
    <property type="entry name" value="AA_TRNA_LIGASE_I"/>
    <property type="match status" value="1"/>
</dbReference>
<dbReference type="PROSITE" id="PS50889">
    <property type="entry name" value="S4"/>
    <property type="match status" value="1"/>
</dbReference>
<protein>
    <recommendedName>
        <fullName evidence="1">Tyrosine--tRNA ligase</fullName>
        <ecNumber evidence="1">6.1.1.1</ecNumber>
    </recommendedName>
    <alternativeName>
        <fullName evidence="1">Tyrosyl-tRNA synthetase</fullName>
        <shortName evidence="1">TyrRS</shortName>
    </alternativeName>
</protein>
<sequence length="420" mass="47598">MTNVLIEDLKWRGLIYQQTDEQGIEDLLNKEQVTLYCGADPTADSLHIGHLLPFLTLRRFQEHGHRPIVLIGGGTGMIGDPSGKSEERVLQTEEQVDKNIEGISKQMHNIFEFGTDHGAVLVNNRDWLGQISLISFLRDYGKHVGVNYMLGKDSIQSRLEHGISYTEFTYTILQAIDFGHLNRELNCKIQVGGSDQWGNITSGIELMRRMYGQTDAYGLTIPLVTKSDGKKFGKSESGAVWLDAEKTSPYEFYQFWINQSDEDVIKFLKYFTFLGKEEIDRLEQSKNEAPHLREAQKTLAEEVTKFIHGEDALNDAIRISQALFSGDLKSLSAKELKDGFKDVPQVTLSNDTTNIVEVLIETGISPSKRQAREDVNNGAIYINGERQQDVNYALAPEDKIDGEFTIIRRGKKKYFMVNYQ</sequence>
<name>SYY_STAAB</name>
<organism>
    <name type="scientific">Staphylococcus aureus (strain bovine RF122 / ET3-1)</name>
    <dbReference type="NCBI Taxonomy" id="273036"/>
    <lineage>
        <taxon>Bacteria</taxon>
        <taxon>Bacillati</taxon>
        <taxon>Bacillota</taxon>
        <taxon>Bacilli</taxon>
        <taxon>Bacillales</taxon>
        <taxon>Staphylococcaceae</taxon>
        <taxon>Staphylococcus</taxon>
    </lineage>
</organism>
<reference key="1">
    <citation type="journal article" date="2007" name="PLoS ONE">
        <title>Molecular correlates of host specialization in Staphylococcus aureus.</title>
        <authorList>
            <person name="Herron-Olson L."/>
            <person name="Fitzgerald J.R."/>
            <person name="Musser J.M."/>
            <person name="Kapur V."/>
        </authorList>
    </citation>
    <scope>NUCLEOTIDE SEQUENCE [LARGE SCALE GENOMIC DNA]</scope>
    <source>
        <strain>bovine RF122 / ET3-1</strain>
    </source>
</reference>
<comment type="function">
    <text evidence="1">Catalyzes the attachment of tyrosine to tRNA(Tyr) in a two-step reaction: tyrosine is first activated by ATP to form Tyr-AMP and then transferred to the acceptor end of tRNA(Tyr).</text>
</comment>
<comment type="catalytic activity">
    <reaction evidence="1">
        <text>tRNA(Tyr) + L-tyrosine + ATP = L-tyrosyl-tRNA(Tyr) + AMP + diphosphate + H(+)</text>
        <dbReference type="Rhea" id="RHEA:10220"/>
        <dbReference type="Rhea" id="RHEA-COMP:9706"/>
        <dbReference type="Rhea" id="RHEA-COMP:9707"/>
        <dbReference type="ChEBI" id="CHEBI:15378"/>
        <dbReference type="ChEBI" id="CHEBI:30616"/>
        <dbReference type="ChEBI" id="CHEBI:33019"/>
        <dbReference type="ChEBI" id="CHEBI:58315"/>
        <dbReference type="ChEBI" id="CHEBI:78442"/>
        <dbReference type="ChEBI" id="CHEBI:78536"/>
        <dbReference type="ChEBI" id="CHEBI:456215"/>
        <dbReference type="EC" id="6.1.1.1"/>
    </reaction>
</comment>
<comment type="subunit">
    <text evidence="1">Homodimer.</text>
</comment>
<comment type="subcellular location">
    <subcellularLocation>
        <location evidence="1">Cytoplasm</location>
    </subcellularLocation>
</comment>
<comment type="similarity">
    <text evidence="1">Belongs to the class-I aminoacyl-tRNA synthetase family. TyrS type 1 subfamily.</text>
</comment>
<keyword id="KW-0030">Aminoacyl-tRNA synthetase</keyword>
<keyword id="KW-0067">ATP-binding</keyword>
<keyword id="KW-0963">Cytoplasm</keyword>
<keyword id="KW-0436">Ligase</keyword>
<keyword id="KW-0547">Nucleotide-binding</keyword>
<keyword id="KW-0648">Protein biosynthesis</keyword>
<keyword id="KW-0694">RNA-binding</keyword>